<protein>
    <recommendedName>
        <fullName evidence="1">Lipoyl synthase</fullName>
        <ecNumber evidence="1">2.8.1.8</ecNumber>
    </recommendedName>
    <alternativeName>
        <fullName evidence="1">Lip-syn</fullName>
        <shortName evidence="1">LS</shortName>
    </alternativeName>
    <alternativeName>
        <fullName evidence="1">Lipoate synthase</fullName>
    </alternativeName>
    <alternativeName>
        <fullName evidence="1">Lipoic acid synthase</fullName>
    </alternativeName>
    <alternativeName>
        <fullName evidence="1">Sulfur insertion protein LipA</fullName>
    </alternativeName>
</protein>
<accession>Q8ZR04</accession>
<evidence type="ECO:0000255" key="1">
    <source>
        <dbReference type="HAMAP-Rule" id="MF_00206"/>
    </source>
</evidence>
<evidence type="ECO:0000255" key="2">
    <source>
        <dbReference type="PROSITE-ProRule" id="PRU01266"/>
    </source>
</evidence>
<dbReference type="EC" id="2.8.1.8" evidence="1"/>
<dbReference type="EMBL" id="AE006468">
    <property type="protein sequence ID" value="AAL19584.1"/>
    <property type="molecule type" value="Genomic_DNA"/>
</dbReference>
<dbReference type="RefSeq" id="NP_459625.1">
    <property type="nucleotide sequence ID" value="NC_003197.2"/>
</dbReference>
<dbReference type="RefSeq" id="WP_000042640.1">
    <property type="nucleotide sequence ID" value="NC_003197.2"/>
</dbReference>
<dbReference type="SMR" id="Q8ZR04"/>
<dbReference type="STRING" id="99287.STM0633"/>
<dbReference type="PaxDb" id="99287-STM0633"/>
<dbReference type="GeneID" id="1252153"/>
<dbReference type="KEGG" id="stm:STM0633"/>
<dbReference type="PATRIC" id="fig|99287.12.peg.667"/>
<dbReference type="HOGENOM" id="CLU_033144_2_1_6"/>
<dbReference type="OMA" id="PYCDIDF"/>
<dbReference type="PhylomeDB" id="Q8ZR04"/>
<dbReference type="BioCyc" id="SENT99287:STM0633-MONOMER"/>
<dbReference type="UniPathway" id="UPA00538">
    <property type="reaction ID" value="UER00593"/>
</dbReference>
<dbReference type="Proteomes" id="UP000001014">
    <property type="component" value="Chromosome"/>
</dbReference>
<dbReference type="GO" id="GO:0005737">
    <property type="term" value="C:cytoplasm"/>
    <property type="evidence" value="ECO:0007669"/>
    <property type="project" value="UniProtKB-SubCell"/>
</dbReference>
<dbReference type="GO" id="GO:0051539">
    <property type="term" value="F:4 iron, 4 sulfur cluster binding"/>
    <property type="evidence" value="ECO:0007669"/>
    <property type="project" value="UniProtKB-UniRule"/>
</dbReference>
<dbReference type="GO" id="GO:0016992">
    <property type="term" value="F:lipoate synthase activity"/>
    <property type="evidence" value="ECO:0007669"/>
    <property type="project" value="UniProtKB-UniRule"/>
</dbReference>
<dbReference type="GO" id="GO:0046872">
    <property type="term" value="F:metal ion binding"/>
    <property type="evidence" value="ECO:0007669"/>
    <property type="project" value="UniProtKB-KW"/>
</dbReference>
<dbReference type="CDD" id="cd01335">
    <property type="entry name" value="Radical_SAM"/>
    <property type="match status" value="1"/>
</dbReference>
<dbReference type="FunFam" id="3.20.20.70:FF:000023">
    <property type="entry name" value="Lipoyl synthase"/>
    <property type="match status" value="1"/>
</dbReference>
<dbReference type="Gene3D" id="3.20.20.70">
    <property type="entry name" value="Aldolase class I"/>
    <property type="match status" value="1"/>
</dbReference>
<dbReference type="HAMAP" id="MF_00206">
    <property type="entry name" value="Lipoyl_synth"/>
    <property type="match status" value="1"/>
</dbReference>
<dbReference type="InterPro" id="IPR013785">
    <property type="entry name" value="Aldolase_TIM"/>
</dbReference>
<dbReference type="InterPro" id="IPR006638">
    <property type="entry name" value="Elp3/MiaA/NifB-like_rSAM"/>
</dbReference>
<dbReference type="InterPro" id="IPR031691">
    <property type="entry name" value="LIAS_N"/>
</dbReference>
<dbReference type="InterPro" id="IPR003698">
    <property type="entry name" value="Lipoyl_synth"/>
</dbReference>
<dbReference type="InterPro" id="IPR007197">
    <property type="entry name" value="rSAM"/>
</dbReference>
<dbReference type="NCBIfam" id="TIGR00510">
    <property type="entry name" value="lipA"/>
    <property type="match status" value="1"/>
</dbReference>
<dbReference type="NCBIfam" id="NF004019">
    <property type="entry name" value="PRK05481.1"/>
    <property type="match status" value="1"/>
</dbReference>
<dbReference type="NCBIfam" id="NF009544">
    <property type="entry name" value="PRK12928.1"/>
    <property type="match status" value="1"/>
</dbReference>
<dbReference type="PANTHER" id="PTHR10949">
    <property type="entry name" value="LIPOYL SYNTHASE"/>
    <property type="match status" value="1"/>
</dbReference>
<dbReference type="PANTHER" id="PTHR10949:SF0">
    <property type="entry name" value="LIPOYL SYNTHASE, MITOCHONDRIAL"/>
    <property type="match status" value="1"/>
</dbReference>
<dbReference type="Pfam" id="PF16881">
    <property type="entry name" value="LIAS_N"/>
    <property type="match status" value="1"/>
</dbReference>
<dbReference type="Pfam" id="PF04055">
    <property type="entry name" value="Radical_SAM"/>
    <property type="match status" value="1"/>
</dbReference>
<dbReference type="PIRSF" id="PIRSF005963">
    <property type="entry name" value="Lipoyl_synth"/>
    <property type="match status" value="1"/>
</dbReference>
<dbReference type="SFLD" id="SFLDF00271">
    <property type="entry name" value="lipoyl_synthase"/>
    <property type="match status" value="1"/>
</dbReference>
<dbReference type="SFLD" id="SFLDS00029">
    <property type="entry name" value="Radical_SAM"/>
    <property type="match status" value="1"/>
</dbReference>
<dbReference type="SMART" id="SM00729">
    <property type="entry name" value="Elp3"/>
    <property type="match status" value="1"/>
</dbReference>
<dbReference type="SUPFAM" id="SSF102114">
    <property type="entry name" value="Radical SAM enzymes"/>
    <property type="match status" value="1"/>
</dbReference>
<dbReference type="PROSITE" id="PS51918">
    <property type="entry name" value="RADICAL_SAM"/>
    <property type="match status" value="1"/>
</dbReference>
<sequence>MSKPIVMERGVKYRDADKMALIPVKNVVTERDALLRKPEWMKIKLPADSTRIQGIKAAMRKNGLHSVCEEASCPNLAECFNHGTATFMILGAICTRRCPFCDVAHGRPVAPDAEEPQKLAQTIADMALRYVVITSVDRDDLRDGGAQHFADCITAIRAKSPEIKIETLVPDFRGRMDRALDILNATPPDVFNHNLENVPRIYRQVRPGADYNWSLKLLERFKEAHPEIPTKSGLMVGLGETNAEIIEVMRDLRRHGVTMLTLGQYLQPSRHHLPVQRYVSPEEFDEMKAEALAMGFTHAACGPFVRSSYHADLQAKGMEVK</sequence>
<keyword id="KW-0004">4Fe-4S</keyword>
<keyword id="KW-0963">Cytoplasm</keyword>
<keyword id="KW-0408">Iron</keyword>
<keyword id="KW-0411">Iron-sulfur</keyword>
<keyword id="KW-0479">Metal-binding</keyword>
<keyword id="KW-1185">Reference proteome</keyword>
<keyword id="KW-0949">S-adenosyl-L-methionine</keyword>
<keyword id="KW-0808">Transferase</keyword>
<comment type="function">
    <text evidence="1">Catalyzes the radical-mediated insertion of two sulfur atoms into the C-6 and C-8 positions of the octanoyl moiety bound to the lipoyl domains of lipoate-dependent enzymes, thereby converting the octanoylated domains into lipoylated derivatives.</text>
</comment>
<comment type="catalytic activity">
    <reaction evidence="1">
        <text>[[Fe-S] cluster scaffold protein carrying a second [4Fe-4S](2+) cluster] + N(6)-octanoyl-L-lysyl-[protein] + 2 oxidized [2Fe-2S]-[ferredoxin] + 2 S-adenosyl-L-methionine + 4 H(+) = [[Fe-S] cluster scaffold protein] + N(6)-[(R)-dihydrolipoyl]-L-lysyl-[protein] + 4 Fe(3+) + 2 hydrogen sulfide + 2 5'-deoxyadenosine + 2 L-methionine + 2 reduced [2Fe-2S]-[ferredoxin]</text>
        <dbReference type="Rhea" id="RHEA:16585"/>
        <dbReference type="Rhea" id="RHEA-COMP:9928"/>
        <dbReference type="Rhea" id="RHEA-COMP:10000"/>
        <dbReference type="Rhea" id="RHEA-COMP:10001"/>
        <dbReference type="Rhea" id="RHEA-COMP:10475"/>
        <dbReference type="Rhea" id="RHEA-COMP:14568"/>
        <dbReference type="Rhea" id="RHEA-COMP:14569"/>
        <dbReference type="ChEBI" id="CHEBI:15378"/>
        <dbReference type="ChEBI" id="CHEBI:17319"/>
        <dbReference type="ChEBI" id="CHEBI:29034"/>
        <dbReference type="ChEBI" id="CHEBI:29919"/>
        <dbReference type="ChEBI" id="CHEBI:33722"/>
        <dbReference type="ChEBI" id="CHEBI:33737"/>
        <dbReference type="ChEBI" id="CHEBI:33738"/>
        <dbReference type="ChEBI" id="CHEBI:57844"/>
        <dbReference type="ChEBI" id="CHEBI:59789"/>
        <dbReference type="ChEBI" id="CHEBI:78809"/>
        <dbReference type="ChEBI" id="CHEBI:83100"/>
        <dbReference type="EC" id="2.8.1.8"/>
    </reaction>
</comment>
<comment type="cofactor">
    <cofactor evidence="1">
        <name>[4Fe-4S] cluster</name>
        <dbReference type="ChEBI" id="CHEBI:49883"/>
    </cofactor>
    <text evidence="1">Binds 2 [4Fe-4S] clusters per subunit. One cluster is coordinated with 3 cysteines and an exchangeable S-adenosyl-L-methionine.</text>
</comment>
<comment type="pathway">
    <text evidence="1">Protein modification; protein lipoylation via endogenous pathway; protein N(6)-(lipoyl)lysine from octanoyl-[acyl-carrier-protein]: step 2/2.</text>
</comment>
<comment type="subcellular location">
    <subcellularLocation>
        <location evidence="1">Cytoplasm</location>
    </subcellularLocation>
</comment>
<comment type="similarity">
    <text evidence="1">Belongs to the radical SAM superfamily. Lipoyl synthase family.</text>
</comment>
<feature type="chain" id="PRO_0000102354" description="Lipoyl synthase">
    <location>
        <begin position="1"/>
        <end position="321"/>
    </location>
</feature>
<feature type="domain" description="Radical SAM core" evidence="2">
    <location>
        <begin position="80"/>
        <end position="297"/>
    </location>
</feature>
<feature type="binding site" evidence="1">
    <location>
        <position position="68"/>
    </location>
    <ligand>
        <name>[4Fe-4S] cluster</name>
        <dbReference type="ChEBI" id="CHEBI:49883"/>
        <label>1</label>
    </ligand>
</feature>
<feature type="binding site" evidence="1">
    <location>
        <position position="73"/>
    </location>
    <ligand>
        <name>[4Fe-4S] cluster</name>
        <dbReference type="ChEBI" id="CHEBI:49883"/>
        <label>1</label>
    </ligand>
</feature>
<feature type="binding site" evidence="1">
    <location>
        <position position="79"/>
    </location>
    <ligand>
        <name>[4Fe-4S] cluster</name>
        <dbReference type="ChEBI" id="CHEBI:49883"/>
        <label>1</label>
    </ligand>
</feature>
<feature type="binding site" evidence="1">
    <location>
        <position position="94"/>
    </location>
    <ligand>
        <name>[4Fe-4S] cluster</name>
        <dbReference type="ChEBI" id="CHEBI:49883"/>
        <label>2</label>
        <note>4Fe-4S-S-AdoMet</note>
    </ligand>
</feature>
<feature type="binding site" evidence="1">
    <location>
        <position position="98"/>
    </location>
    <ligand>
        <name>[4Fe-4S] cluster</name>
        <dbReference type="ChEBI" id="CHEBI:49883"/>
        <label>2</label>
        <note>4Fe-4S-S-AdoMet</note>
    </ligand>
</feature>
<feature type="binding site" evidence="1">
    <location>
        <position position="101"/>
    </location>
    <ligand>
        <name>[4Fe-4S] cluster</name>
        <dbReference type="ChEBI" id="CHEBI:49883"/>
        <label>2</label>
        <note>4Fe-4S-S-AdoMet</note>
    </ligand>
</feature>
<feature type="binding site" evidence="1">
    <location>
        <position position="308"/>
    </location>
    <ligand>
        <name>[4Fe-4S] cluster</name>
        <dbReference type="ChEBI" id="CHEBI:49883"/>
        <label>1</label>
    </ligand>
</feature>
<gene>
    <name evidence="1" type="primary">lipA</name>
    <name type="ordered locus">STM0633</name>
</gene>
<proteinExistence type="inferred from homology"/>
<organism>
    <name type="scientific">Salmonella typhimurium (strain LT2 / SGSC1412 / ATCC 700720)</name>
    <dbReference type="NCBI Taxonomy" id="99287"/>
    <lineage>
        <taxon>Bacteria</taxon>
        <taxon>Pseudomonadati</taxon>
        <taxon>Pseudomonadota</taxon>
        <taxon>Gammaproteobacteria</taxon>
        <taxon>Enterobacterales</taxon>
        <taxon>Enterobacteriaceae</taxon>
        <taxon>Salmonella</taxon>
    </lineage>
</organism>
<reference key="1">
    <citation type="journal article" date="2001" name="Nature">
        <title>Complete genome sequence of Salmonella enterica serovar Typhimurium LT2.</title>
        <authorList>
            <person name="McClelland M."/>
            <person name="Sanderson K.E."/>
            <person name="Spieth J."/>
            <person name="Clifton S.W."/>
            <person name="Latreille P."/>
            <person name="Courtney L."/>
            <person name="Porwollik S."/>
            <person name="Ali J."/>
            <person name="Dante M."/>
            <person name="Du F."/>
            <person name="Hou S."/>
            <person name="Layman D."/>
            <person name="Leonard S."/>
            <person name="Nguyen C."/>
            <person name="Scott K."/>
            <person name="Holmes A."/>
            <person name="Grewal N."/>
            <person name="Mulvaney E."/>
            <person name="Ryan E."/>
            <person name="Sun H."/>
            <person name="Florea L."/>
            <person name="Miller W."/>
            <person name="Stoneking T."/>
            <person name="Nhan M."/>
            <person name="Waterston R."/>
            <person name="Wilson R.K."/>
        </authorList>
    </citation>
    <scope>NUCLEOTIDE SEQUENCE [LARGE SCALE GENOMIC DNA]</scope>
    <source>
        <strain>LT2 / SGSC1412 / ATCC 700720</strain>
    </source>
</reference>
<name>LIPA_SALTY</name>